<keyword id="KW-0002">3D-structure</keyword>
<keyword id="KW-0067">ATP-binding</keyword>
<keyword id="KW-0143">Chaperone</keyword>
<keyword id="KW-0150">Chloroplast</keyword>
<keyword id="KW-0547">Nucleotide-binding</keyword>
<keyword id="KW-0934">Plastid</keyword>
<keyword id="KW-0346">Stress response</keyword>
<keyword id="KW-0809">Transit peptide</keyword>
<organism>
    <name type="scientific">Chlamydomonas reinhardtii</name>
    <name type="common">Chlamydomonas smithii</name>
    <dbReference type="NCBI Taxonomy" id="3055"/>
    <lineage>
        <taxon>Eukaryota</taxon>
        <taxon>Viridiplantae</taxon>
        <taxon>Chlorophyta</taxon>
        <taxon>core chlorophytes</taxon>
        <taxon>Chlorophyceae</taxon>
        <taxon>CS clade</taxon>
        <taxon>Chlamydomonadales</taxon>
        <taxon>Chlamydomonadaceae</taxon>
        <taxon>Chlamydomonas</taxon>
    </lineage>
</organism>
<evidence type="ECO:0000255" key="1"/>
<evidence type="ECO:0000256" key="2">
    <source>
        <dbReference type="SAM" id="MobiDB-lite"/>
    </source>
</evidence>
<evidence type="ECO:0000305" key="3"/>
<evidence type="ECO:0007829" key="4">
    <source>
        <dbReference type="PDB" id="5CDJ"/>
    </source>
</evidence>
<feature type="transit peptide" description="Chloroplast" evidence="1">
    <location>
        <begin position="1"/>
        <end status="unknown"/>
    </location>
</feature>
<feature type="chain" id="PRO_0000005019" description="RuBisCO large subunit-binding protein subunit alpha, chloroplastic">
    <location>
        <begin status="unknown"/>
        <end position="580"/>
    </location>
</feature>
<feature type="region of interest" description="Disordered" evidence="2">
    <location>
        <begin position="1"/>
        <end position="24"/>
    </location>
</feature>
<feature type="compositionally biased region" description="Polar residues" evidence="2">
    <location>
        <begin position="1"/>
        <end position="17"/>
    </location>
</feature>
<feature type="strand" evidence="4">
    <location>
        <begin position="226"/>
        <end position="229"/>
    </location>
</feature>
<feature type="helix" evidence="4">
    <location>
        <begin position="235"/>
        <end position="237"/>
    </location>
</feature>
<feature type="turn" evidence="4">
    <location>
        <begin position="241"/>
        <end position="244"/>
    </location>
</feature>
<feature type="strand" evidence="4">
    <location>
        <begin position="245"/>
        <end position="260"/>
    </location>
</feature>
<feature type="helix" evidence="4">
    <location>
        <begin position="263"/>
        <end position="274"/>
    </location>
</feature>
<feature type="turn" evidence="4">
    <location>
        <begin position="275"/>
        <end position="277"/>
    </location>
</feature>
<feature type="strand" evidence="4">
    <location>
        <begin position="280"/>
        <end position="287"/>
    </location>
</feature>
<feature type="helix" evidence="4">
    <location>
        <begin position="289"/>
        <end position="300"/>
    </location>
</feature>
<feature type="strand" evidence="4">
    <location>
        <begin position="306"/>
        <end position="310"/>
    </location>
</feature>
<feature type="strand" evidence="4">
    <location>
        <begin position="312"/>
        <end position="314"/>
    </location>
</feature>
<feature type="helix" evidence="4">
    <location>
        <begin position="315"/>
        <end position="329"/>
    </location>
</feature>
<feature type="helix" evidence="4">
    <location>
        <begin position="336"/>
        <end position="338"/>
    </location>
</feature>
<feature type="helix" evidence="4">
    <location>
        <begin position="342"/>
        <end position="344"/>
    </location>
</feature>
<feature type="helix" evidence="4">
    <location>
        <begin position="347"/>
        <end position="349"/>
    </location>
</feature>
<feature type="strand" evidence="4">
    <location>
        <begin position="351"/>
        <end position="358"/>
    </location>
</feature>
<feature type="strand" evidence="4">
    <location>
        <begin position="363"/>
        <end position="366"/>
    </location>
</feature>
<feature type="helix" evidence="4">
    <location>
        <begin position="372"/>
        <end position="388"/>
    </location>
</feature>
<feature type="helix" evidence="4">
    <location>
        <begin position="392"/>
        <end position="405"/>
    </location>
</feature>
<accession>Q42694</accession>
<name>RUBA_CHLRE</name>
<sequence length="580" mass="61863">MAQSQLAKGSRQTTGRPFQNKPARAARRLVIRAADAKEIVFDQESRRRLQAGINKVADAVGVTLGPRGRNVVLEQKFGVPQVINDGVSIRRAIELKDPVENAGAQLIKEVAGRTNDAAGDGTTTASVLAREMIHYGLQSVTAGANPIAVKRGLDKTAEYLVAKLKEHAKPVKGRDDIKNVASISAGNDNAIGEMIADALDKVGSNGVLSIETSNSTETVVEVQEGMEIDRGYISPQFVTNQERLLVEYDNCRVLVTDQKIDAIRDIIPILEQVTRLNAPLLIIAEDVSGEALATLVVNKLRGVLNVCAIKAPGFGERRKSLLQDIAIVTGAEFIAKDLGMKVEQAVVEQLGVARKVTVANNTTTLIADAASKDEIEMRIAQLKKELAETDSVYDTEKLSERIAKLSGGVAVIKVGAATEAELEDRKLRIEDAKNATFAAVEEGIVPGGGAALLHLSELVPAFKETLTDAEEKLGADIVMKSLRAPCRLIADNAGVEGEVIVQRLLGKPFEVGYNAMIDKVENLLDAGVIDPAKVTRNGLLNSVSIAGIMLTTQAVMVEKHKPSEIPGGMTASGMPSGMTI</sequence>
<dbReference type="EMBL" id="L27472">
    <property type="protein sequence ID" value="AAA98642.1"/>
    <property type="molecule type" value="mRNA"/>
</dbReference>
<dbReference type="PIR" id="S56645">
    <property type="entry name" value="S56645"/>
</dbReference>
<dbReference type="PDB" id="5CDJ">
    <property type="method" value="X-ray"/>
    <property type="resolution" value="1.75 A"/>
    <property type="chains" value="A/B=224-408"/>
</dbReference>
<dbReference type="PDBsum" id="5CDJ"/>
<dbReference type="SMR" id="Q42694"/>
<dbReference type="PaxDb" id="3055-EDO96383"/>
<dbReference type="ProMEX" id="Q42694"/>
<dbReference type="eggNOG" id="KOG0356">
    <property type="taxonomic scope" value="Eukaryota"/>
</dbReference>
<dbReference type="GO" id="GO:0009507">
    <property type="term" value="C:chloroplast"/>
    <property type="evidence" value="ECO:0007669"/>
    <property type="project" value="UniProtKB-SubCell"/>
</dbReference>
<dbReference type="GO" id="GO:0005524">
    <property type="term" value="F:ATP binding"/>
    <property type="evidence" value="ECO:0007669"/>
    <property type="project" value="UniProtKB-KW"/>
</dbReference>
<dbReference type="GO" id="GO:0140662">
    <property type="term" value="F:ATP-dependent protein folding chaperone"/>
    <property type="evidence" value="ECO:0007669"/>
    <property type="project" value="InterPro"/>
</dbReference>
<dbReference type="GO" id="GO:0042026">
    <property type="term" value="P:protein refolding"/>
    <property type="evidence" value="ECO:0007669"/>
    <property type="project" value="InterPro"/>
</dbReference>
<dbReference type="CDD" id="cd03344">
    <property type="entry name" value="GroEL"/>
    <property type="match status" value="1"/>
</dbReference>
<dbReference type="FunFam" id="3.50.7.10:FF:000001">
    <property type="entry name" value="60 kDa chaperonin"/>
    <property type="match status" value="1"/>
</dbReference>
<dbReference type="Gene3D" id="3.50.7.10">
    <property type="entry name" value="GroEL"/>
    <property type="match status" value="1"/>
</dbReference>
<dbReference type="Gene3D" id="1.10.560.10">
    <property type="entry name" value="GroEL-like equatorial domain"/>
    <property type="match status" value="1"/>
</dbReference>
<dbReference type="Gene3D" id="3.30.260.10">
    <property type="entry name" value="TCP-1-like chaperonin intermediate domain"/>
    <property type="match status" value="1"/>
</dbReference>
<dbReference type="HAMAP" id="MF_00600">
    <property type="entry name" value="CH60"/>
    <property type="match status" value="1"/>
</dbReference>
<dbReference type="InterPro" id="IPR018370">
    <property type="entry name" value="Chaperonin_Cpn60_CS"/>
</dbReference>
<dbReference type="InterPro" id="IPR001844">
    <property type="entry name" value="Cpn60/GroEL"/>
</dbReference>
<dbReference type="InterPro" id="IPR002423">
    <property type="entry name" value="Cpn60/GroEL/TCP-1"/>
</dbReference>
<dbReference type="InterPro" id="IPR027409">
    <property type="entry name" value="GroEL-like_apical_dom_sf"/>
</dbReference>
<dbReference type="InterPro" id="IPR027413">
    <property type="entry name" value="GROEL-like_equatorial_sf"/>
</dbReference>
<dbReference type="InterPro" id="IPR027410">
    <property type="entry name" value="TCP-1-like_intermed_sf"/>
</dbReference>
<dbReference type="NCBIfam" id="TIGR02348">
    <property type="entry name" value="GroEL"/>
    <property type="match status" value="1"/>
</dbReference>
<dbReference type="NCBIfam" id="NF000592">
    <property type="entry name" value="PRK00013.1"/>
    <property type="match status" value="1"/>
</dbReference>
<dbReference type="NCBIfam" id="NF009487">
    <property type="entry name" value="PRK12849.1"/>
    <property type="match status" value="1"/>
</dbReference>
<dbReference type="NCBIfam" id="NF009488">
    <property type="entry name" value="PRK12850.1"/>
    <property type="match status" value="1"/>
</dbReference>
<dbReference type="NCBIfam" id="NF009489">
    <property type="entry name" value="PRK12851.1"/>
    <property type="match status" value="1"/>
</dbReference>
<dbReference type="PANTHER" id="PTHR45633">
    <property type="entry name" value="60 KDA HEAT SHOCK PROTEIN, MITOCHONDRIAL"/>
    <property type="match status" value="1"/>
</dbReference>
<dbReference type="Pfam" id="PF00118">
    <property type="entry name" value="Cpn60_TCP1"/>
    <property type="match status" value="1"/>
</dbReference>
<dbReference type="PRINTS" id="PR00298">
    <property type="entry name" value="CHAPERONIN60"/>
</dbReference>
<dbReference type="SUPFAM" id="SSF52029">
    <property type="entry name" value="GroEL apical domain-like"/>
    <property type="match status" value="1"/>
</dbReference>
<dbReference type="SUPFAM" id="SSF48592">
    <property type="entry name" value="GroEL equatorial domain-like"/>
    <property type="match status" value="1"/>
</dbReference>
<dbReference type="SUPFAM" id="SSF54849">
    <property type="entry name" value="GroEL-intermediate domain like"/>
    <property type="match status" value="1"/>
</dbReference>
<dbReference type="PROSITE" id="PS00296">
    <property type="entry name" value="CHAPERONINS_CPN60"/>
    <property type="match status" value="1"/>
</dbReference>
<proteinExistence type="evidence at protein level"/>
<comment type="function">
    <text>This protein binds RuBisCO small and large subunits and is implicated in the assembly of the enzyme oligomer.</text>
</comment>
<comment type="subunit">
    <text>Oligomer of probably six alpha and six beta subunits.</text>
</comment>
<comment type="subcellular location">
    <subcellularLocation>
        <location>Plastid</location>
        <location>Chloroplast</location>
    </subcellularLocation>
</comment>
<comment type="induction">
    <text>By heat shock.</text>
</comment>
<comment type="miscellaneous">
    <text>This protein shows ATPase activity.</text>
</comment>
<comment type="similarity">
    <text evidence="3">Belongs to the chaperonin (HSP60) family.</text>
</comment>
<reference key="1">
    <citation type="journal article" date="1995" name="Plant Mol. Biol.">
        <title>Chlamydomonas transcripts encoding three divergent plastid chaperonins are heat-inducible.</title>
        <authorList>
            <person name="Thompson M.D."/>
            <person name="Paavola C.D."/>
            <person name="Lenvik T.R."/>
            <person name="Gantt J.S."/>
        </authorList>
    </citation>
    <scope>NUCLEOTIDE SEQUENCE [MRNA]</scope>
</reference>
<protein>
    <recommendedName>
        <fullName>RuBisCO large subunit-binding protein subunit alpha, chloroplastic</fullName>
    </recommendedName>
    <alternativeName>
        <fullName>60 kDa chaperonin subunit alpha</fullName>
    </alternativeName>
    <alternativeName>
        <fullName>CPN-60 alpha</fullName>
    </alternativeName>
</protein>